<protein>
    <recommendedName>
        <fullName evidence="1">Serine hydroxymethyltransferase</fullName>
        <shortName evidence="1">SHMT</shortName>
        <shortName evidence="1">Serine methylase</shortName>
        <ecNumber evidence="1">2.1.2.1</ecNumber>
    </recommendedName>
</protein>
<dbReference type="EC" id="2.1.2.1" evidence="1"/>
<dbReference type="EMBL" id="L33463">
    <property type="protein sequence ID" value="AAA64456.1"/>
    <property type="molecule type" value="Genomic_DNA"/>
</dbReference>
<dbReference type="EMBL" id="CP001510">
    <property type="protein sequence ID" value="ACS41121.1"/>
    <property type="molecule type" value="Genomic_DNA"/>
</dbReference>
<dbReference type="RefSeq" id="WP_003601128.1">
    <property type="nucleotide sequence ID" value="NC_012808.1"/>
</dbReference>
<dbReference type="SMR" id="P50435"/>
<dbReference type="STRING" id="272630.MexAM1_META1p3384"/>
<dbReference type="GeneID" id="72990817"/>
<dbReference type="KEGG" id="mea:Mex_1p3384"/>
<dbReference type="eggNOG" id="COG0112">
    <property type="taxonomic scope" value="Bacteria"/>
</dbReference>
<dbReference type="HOGENOM" id="CLU_022477_2_1_5"/>
<dbReference type="OrthoDB" id="9803846at2"/>
<dbReference type="UniPathway" id="UPA00193"/>
<dbReference type="UniPathway" id="UPA00288">
    <property type="reaction ID" value="UER01023"/>
</dbReference>
<dbReference type="Proteomes" id="UP000009081">
    <property type="component" value="Chromosome"/>
</dbReference>
<dbReference type="GO" id="GO:0005829">
    <property type="term" value="C:cytosol"/>
    <property type="evidence" value="ECO:0007669"/>
    <property type="project" value="TreeGrafter"/>
</dbReference>
<dbReference type="GO" id="GO:0004372">
    <property type="term" value="F:glycine hydroxymethyltransferase activity"/>
    <property type="evidence" value="ECO:0007669"/>
    <property type="project" value="UniProtKB-UniRule"/>
</dbReference>
<dbReference type="GO" id="GO:0030170">
    <property type="term" value="F:pyridoxal phosphate binding"/>
    <property type="evidence" value="ECO:0007669"/>
    <property type="project" value="UniProtKB-UniRule"/>
</dbReference>
<dbReference type="GO" id="GO:0019264">
    <property type="term" value="P:glycine biosynthetic process from serine"/>
    <property type="evidence" value="ECO:0007669"/>
    <property type="project" value="UniProtKB-UniRule"/>
</dbReference>
<dbReference type="GO" id="GO:0035999">
    <property type="term" value="P:tetrahydrofolate interconversion"/>
    <property type="evidence" value="ECO:0007669"/>
    <property type="project" value="UniProtKB-UniRule"/>
</dbReference>
<dbReference type="CDD" id="cd00378">
    <property type="entry name" value="SHMT"/>
    <property type="match status" value="1"/>
</dbReference>
<dbReference type="FunFam" id="3.40.640.10:FF:000001">
    <property type="entry name" value="Serine hydroxymethyltransferase"/>
    <property type="match status" value="1"/>
</dbReference>
<dbReference type="FunFam" id="3.90.1150.10:FF:000003">
    <property type="entry name" value="Serine hydroxymethyltransferase"/>
    <property type="match status" value="1"/>
</dbReference>
<dbReference type="Gene3D" id="3.90.1150.10">
    <property type="entry name" value="Aspartate Aminotransferase, domain 1"/>
    <property type="match status" value="1"/>
</dbReference>
<dbReference type="Gene3D" id="3.40.640.10">
    <property type="entry name" value="Type I PLP-dependent aspartate aminotransferase-like (Major domain)"/>
    <property type="match status" value="1"/>
</dbReference>
<dbReference type="HAMAP" id="MF_00051">
    <property type="entry name" value="SHMT"/>
    <property type="match status" value="1"/>
</dbReference>
<dbReference type="InterPro" id="IPR015424">
    <property type="entry name" value="PyrdxlP-dep_Trfase"/>
</dbReference>
<dbReference type="InterPro" id="IPR015421">
    <property type="entry name" value="PyrdxlP-dep_Trfase_major"/>
</dbReference>
<dbReference type="InterPro" id="IPR015422">
    <property type="entry name" value="PyrdxlP-dep_Trfase_small"/>
</dbReference>
<dbReference type="InterPro" id="IPR001085">
    <property type="entry name" value="Ser_HO-MeTrfase"/>
</dbReference>
<dbReference type="InterPro" id="IPR049943">
    <property type="entry name" value="Ser_HO-MeTrfase-like"/>
</dbReference>
<dbReference type="InterPro" id="IPR019798">
    <property type="entry name" value="Ser_HO-MeTrfase_PLP_BS"/>
</dbReference>
<dbReference type="InterPro" id="IPR039429">
    <property type="entry name" value="SHMT-like_dom"/>
</dbReference>
<dbReference type="NCBIfam" id="NF000586">
    <property type="entry name" value="PRK00011.1"/>
    <property type="match status" value="1"/>
</dbReference>
<dbReference type="PANTHER" id="PTHR11680">
    <property type="entry name" value="SERINE HYDROXYMETHYLTRANSFERASE"/>
    <property type="match status" value="1"/>
</dbReference>
<dbReference type="PANTHER" id="PTHR11680:SF35">
    <property type="entry name" value="SERINE HYDROXYMETHYLTRANSFERASE 1"/>
    <property type="match status" value="1"/>
</dbReference>
<dbReference type="Pfam" id="PF00464">
    <property type="entry name" value="SHMT"/>
    <property type="match status" value="1"/>
</dbReference>
<dbReference type="PIRSF" id="PIRSF000412">
    <property type="entry name" value="SHMT"/>
    <property type="match status" value="1"/>
</dbReference>
<dbReference type="SUPFAM" id="SSF53383">
    <property type="entry name" value="PLP-dependent transferases"/>
    <property type="match status" value="1"/>
</dbReference>
<dbReference type="PROSITE" id="PS00096">
    <property type="entry name" value="SHMT"/>
    <property type="match status" value="1"/>
</dbReference>
<feature type="chain" id="PRO_0000113605" description="Serine hydroxymethyltransferase">
    <location>
        <begin position="1"/>
        <end position="434"/>
    </location>
</feature>
<feature type="binding site" evidence="1">
    <location>
        <position position="133"/>
    </location>
    <ligand>
        <name>(6S)-5,6,7,8-tetrahydrofolate</name>
        <dbReference type="ChEBI" id="CHEBI:57453"/>
    </ligand>
</feature>
<feature type="binding site" evidence="1">
    <location>
        <begin position="137"/>
        <end position="139"/>
    </location>
    <ligand>
        <name>(6S)-5,6,7,8-tetrahydrofolate</name>
        <dbReference type="ChEBI" id="CHEBI:57453"/>
    </ligand>
</feature>
<feature type="site" description="Plays an important role in substrate specificity" evidence="1">
    <location>
        <position position="241"/>
    </location>
</feature>
<feature type="modified residue" description="N6-(pyridoxal phosphate)lysine" evidence="1">
    <location>
        <position position="242"/>
    </location>
</feature>
<feature type="sequence conflict" description="In Ref. 1; AAA64456." evidence="2" ref="1">
    <original>V</original>
    <variation>A</variation>
    <location>
        <position position="285"/>
    </location>
</feature>
<organism>
    <name type="scientific">Methylorubrum extorquens (strain ATCC 14718 / DSM 1338 / JCM 2805 / NCIMB 9133 / AM1)</name>
    <name type="common">Methylobacterium extorquens</name>
    <dbReference type="NCBI Taxonomy" id="272630"/>
    <lineage>
        <taxon>Bacteria</taxon>
        <taxon>Pseudomonadati</taxon>
        <taxon>Pseudomonadota</taxon>
        <taxon>Alphaproteobacteria</taxon>
        <taxon>Hyphomicrobiales</taxon>
        <taxon>Methylobacteriaceae</taxon>
        <taxon>Methylorubrum</taxon>
    </lineage>
</organism>
<comment type="function">
    <text evidence="1">Catalyzes the reversible interconversion of serine and glycine with tetrahydrofolate (THF) serving as the one-carbon carrier. This reaction serves as the major source of one-carbon groups required for the biosynthesis of purines, thymidylate, methionine, and other important biomolecules. Also exhibits THF-independent aldolase activity toward beta-hydroxyamino acids, producing glycine and aldehydes, via a retro-aldol mechanism.</text>
</comment>
<comment type="catalytic activity">
    <reaction evidence="1">
        <text>(6R)-5,10-methylene-5,6,7,8-tetrahydrofolate + glycine + H2O = (6S)-5,6,7,8-tetrahydrofolate + L-serine</text>
        <dbReference type="Rhea" id="RHEA:15481"/>
        <dbReference type="ChEBI" id="CHEBI:15377"/>
        <dbReference type="ChEBI" id="CHEBI:15636"/>
        <dbReference type="ChEBI" id="CHEBI:33384"/>
        <dbReference type="ChEBI" id="CHEBI:57305"/>
        <dbReference type="ChEBI" id="CHEBI:57453"/>
        <dbReference type="EC" id="2.1.2.1"/>
    </reaction>
</comment>
<comment type="cofactor">
    <cofactor evidence="1">
        <name>pyridoxal 5'-phosphate</name>
        <dbReference type="ChEBI" id="CHEBI:597326"/>
    </cofactor>
</comment>
<comment type="pathway">
    <text evidence="1">One-carbon metabolism; tetrahydrofolate interconversion.</text>
</comment>
<comment type="pathway">
    <text evidence="1">Amino-acid biosynthesis; glycine biosynthesis; glycine from L-serine: step 1/1.</text>
</comment>
<comment type="subunit">
    <text evidence="1">Homodimer.</text>
</comment>
<comment type="subcellular location">
    <subcellularLocation>
        <location evidence="1">Cytoplasm</location>
    </subcellularLocation>
</comment>
<comment type="similarity">
    <text evidence="1">Belongs to the SHMT family.</text>
</comment>
<sequence>MSAGTATDTTDLDSFFSAHLAETDPEIAKAISQELGRQQHEIELIASENIVSRAVLEAQGSVLTNKYAEGYPGRRYYGGCQFVDIAEELAIDRAKRLFGCGFANVQPNSGSQANQGVFMALMQPGDTFLGLDLAAGGHLTHGAPPNVSGKWFKPVSYTVRREDQRIDMEQVERLAQEHKPKVIIAGGSGYPRHWDFAKFREIADSVGAYFFVDMAHFAGLVAAGLHPSPFPHAHVATTTTHKTLRGPRGGMILTNDEALAKKFNSAIFPGLQGGPLMHVIAAKAVAFGEALKPEFKIYAKQVIDNARALADTIISGGYDITSGGTDNHLMLVDLQKKGLTGKAAEAALSRADITCNKNGVPFDPQKPTITSGIRLGTPASTTRGFGVAEFKQVGSLIVQVLDGIAEKGDGGDAAVEAAVKEKVHALTDRFPIYA</sequence>
<gene>
    <name evidence="1" type="primary">glyA</name>
    <name type="ordered locus">MexAM1_META1p3384</name>
</gene>
<accession>P50435</accession>
<accession>C5AXQ3</accession>
<evidence type="ECO:0000255" key="1">
    <source>
        <dbReference type="HAMAP-Rule" id="MF_00051"/>
    </source>
</evidence>
<evidence type="ECO:0000305" key="2"/>
<reference key="1">
    <citation type="journal article" date="1994" name="J. Bacteriol.">
        <title>Genetics of the serine cycle in Methylobacterium extorquens AM1: cloning, sequence, mutation, and physiological effect of glyA, the gene for serine hydroxymethyltransferase.</title>
        <authorList>
            <person name="Chistoserdova L.V."/>
            <person name="Lidstrom M.E."/>
        </authorList>
    </citation>
    <scope>NUCLEOTIDE SEQUENCE [GENOMIC DNA]</scope>
</reference>
<reference key="2">
    <citation type="journal article" date="2009" name="PLoS ONE">
        <title>Methylobacterium genome sequences: a reference blueprint to investigate microbial metabolism of C1 compounds from natural and industrial sources.</title>
        <authorList>
            <person name="Vuilleumier S."/>
            <person name="Chistoserdova L."/>
            <person name="Lee M.-C."/>
            <person name="Bringel F."/>
            <person name="Lajus A."/>
            <person name="Zhou Y."/>
            <person name="Gourion B."/>
            <person name="Barbe V."/>
            <person name="Chang J."/>
            <person name="Cruveiller S."/>
            <person name="Dossat C."/>
            <person name="Gillett W."/>
            <person name="Gruffaz C."/>
            <person name="Haugen E."/>
            <person name="Hourcade E."/>
            <person name="Levy R."/>
            <person name="Mangenot S."/>
            <person name="Muller E."/>
            <person name="Nadalig T."/>
            <person name="Pagni M."/>
            <person name="Penny C."/>
            <person name="Peyraud R."/>
            <person name="Robinson D.G."/>
            <person name="Roche D."/>
            <person name="Rouy Z."/>
            <person name="Saenampechek C."/>
            <person name="Salvignol G."/>
            <person name="Vallenet D."/>
            <person name="Wu Z."/>
            <person name="Marx C.J."/>
            <person name="Vorholt J.A."/>
            <person name="Olson M.V."/>
            <person name="Kaul R."/>
            <person name="Weissenbach J."/>
            <person name="Medigue C."/>
            <person name="Lidstrom M.E."/>
        </authorList>
    </citation>
    <scope>NUCLEOTIDE SEQUENCE [LARGE SCALE GENOMIC DNA]</scope>
    <source>
        <strain>ATCC 14718 / DSM 1338 / JCM 2805 / NCIMB 9133 / AM1</strain>
    </source>
</reference>
<proteinExistence type="inferred from homology"/>
<name>GLYA_METEA</name>
<keyword id="KW-0028">Amino-acid biosynthesis</keyword>
<keyword id="KW-0963">Cytoplasm</keyword>
<keyword id="KW-0554">One-carbon metabolism</keyword>
<keyword id="KW-0663">Pyridoxal phosphate</keyword>
<keyword id="KW-1185">Reference proteome</keyword>
<keyword id="KW-0808">Transferase</keyword>